<organism>
    <name type="scientific">Homo sapiens</name>
    <name type="common">Human</name>
    <dbReference type="NCBI Taxonomy" id="9606"/>
    <lineage>
        <taxon>Eukaryota</taxon>
        <taxon>Metazoa</taxon>
        <taxon>Chordata</taxon>
        <taxon>Craniata</taxon>
        <taxon>Vertebrata</taxon>
        <taxon>Euteleostomi</taxon>
        <taxon>Mammalia</taxon>
        <taxon>Eutheria</taxon>
        <taxon>Euarchontoglires</taxon>
        <taxon>Primates</taxon>
        <taxon>Haplorrhini</taxon>
        <taxon>Catarrhini</taxon>
        <taxon>Hominidae</taxon>
        <taxon>Homo</taxon>
    </lineage>
</organism>
<comment type="function">
    <text>Potential calcium-dependent cell-adhesion protein. May be involved in the establishment and maintenance of specific neuronal connections in the brain.</text>
</comment>
<comment type="subcellular location">
    <molecule>Isoform 1</molecule>
    <subcellularLocation>
        <location evidence="1">Cell membrane</location>
        <topology evidence="1">Single-pass type I membrane protein</topology>
    </subcellularLocation>
</comment>
<comment type="subcellular location">
    <molecule>Isoform 2</molecule>
    <subcellularLocation>
        <location evidence="6">Secreted</location>
    </subcellularLocation>
</comment>
<comment type="alternative products">
    <event type="alternative splicing"/>
    <isoform>
        <id>Q9Y5I3-1</id>
        <name>1</name>
        <sequence type="displayed"/>
    </isoform>
    <isoform>
        <id>Q9Y5I3-2</id>
        <name>2</name>
        <sequence type="described" ref="VSP_000670"/>
    </isoform>
    <isoform>
        <id>Q9Y5I3-3</id>
        <name>3</name>
        <sequence type="described" ref="VSP_000671 VSP_000672"/>
    </isoform>
    <text>Additional isoforms seem to exist.</text>
</comment>
<reference key="1">
    <citation type="journal article" date="1999" name="Cell">
        <title>A striking organization of a large family of human neural cadherin-like cell adhesion genes.</title>
        <authorList>
            <person name="Wu Q."/>
            <person name="Maniatis T."/>
        </authorList>
    </citation>
    <scope>NUCLEOTIDE SEQUENCE [MRNA] (ISOFORMS 1 AND 3)</scope>
    <source>
        <tissue>Brain</tissue>
    </source>
</reference>
<reference key="2">
    <citation type="submission" date="1999-07" db="EMBL/GenBank/DDBJ databases">
        <title>Alternative splicing within the human CNR family of protocadherins (PCDH-alpha) produces transcripts encoding secreted proteins.</title>
        <authorList>
            <person name="Kools P.F.J."/>
            <person name="van Roy F."/>
        </authorList>
    </citation>
    <scope>NUCLEOTIDE SEQUENCE (ISOFORM 2)</scope>
    <source>
        <tissue>Brain</tissue>
    </source>
</reference>
<reference key="3">
    <citation type="journal article" date="2004" name="Nature">
        <title>The DNA sequence and comparative analysis of human chromosome 5.</title>
        <authorList>
            <person name="Schmutz J."/>
            <person name="Martin J."/>
            <person name="Terry A."/>
            <person name="Couronne O."/>
            <person name="Grimwood J."/>
            <person name="Lowry S."/>
            <person name="Gordon L.A."/>
            <person name="Scott D."/>
            <person name="Xie G."/>
            <person name="Huang W."/>
            <person name="Hellsten U."/>
            <person name="Tran-Gyamfi M."/>
            <person name="She X."/>
            <person name="Prabhakar S."/>
            <person name="Aerts A."/>
            <person name="Altherr M."/>
            <person name="Bajorek E."/>
            <person name="Black S."/>
            <person name="Branscomb E."/>
            <person name="Caoile C."/>
            <person name="Challacombe J.F."/>
            <person name="Chan Y.M."/>
            <person name="Denys M."/>
            <person name="Detter J.C."/>
            <person name="Escobar J."/>
            <person name="Flowers D."/>
            <person name="Fotopulos D."/>
            <person name="Glavina T."/>
            <person name="Gomez M."/>
            <person name="Gonzales E."/>
            <person name="Goodstein D."/>
            <person name="Grigoriev I."/>
            <person name="Groza M."/>
            <person name="Hammon N."/>
            <person name="Hawkins T."/>
            <person name="Haydu L."/>
            <person name="Israni S."/>
            <person name="Jett J."/>
            <person name="Kadner K."/>
            <person name="Kimball H."/>
            <person name="Kobayashi A."/>
            <person name="Lopez F."/>
            <person name="Lou Y."/>
            <person name="Martinez D."/>
            <person name="Medina C."/>
            <person name="Morgan J."/>
            <person name="Nandkeshwar R."/>
            <person name="Noonan J.P."/>
            <person name="Pitluck S."/>
            <person name="Pollard M."/>
            <person name="Predki P."/>
            <person name="Priest J."/>
            <person name="Ramirez L."/>
            <person name="Retterer J."/>
            <person name="Rodriguez A."/>
            <person name="Rogers S."/>
            <person name="Salamov A."/>
            <person name="Salazar A."/>
            <person name="Thayer N."/>
            <person name="Tice H."/>
            <person name="Tsai M."/>
            <person name="Ustaszewska A."/>
            <person name="Vo N."/>
            <person name="Wheeler J."/>
            <person name="Wu K."/>
            <person name="Yang J."/>
            <person name="Dickson M."/>
            <person name="Cheng J.-F."/>
            <person name="Eichler E.E."/>
            <person name="Olsen A."/>
            <person name="Pennacchio L.A."/>
            <person name="Rokhsar D.S."/>
            <person name="Richardson P."/>
            <person name="Lucas S.M."/>
            <person name="Myers R.M."/>
            <person name="Rubin E.M."/>
        </authorList>
    </citation>
    <scope>NUCLEOTIDE SEQUENCE [LARGE SCALE GENOMIC DNA]</scope>
</reference>
<evidence type="ECO:0000250" key="1"/>
<evidence type="ECO:0000255" key="2"/>
<evidence type="ECO:0000255" key="3">
    <source>
        <dbReference type="PROSITE-ProRule" id="PRU00043"/>
    </source>
</evidence>
<evidence type="ECO:0000256" key="4">
    <source>
        <dbReference type="SAM" id="MobiDB-lite"/>
    </source>
</evidence>
<evidence type="ECO:0000303" key="5">
    <source>
    </source>
</evidence>
<evidence type="ECO:0000305" key="6"/>
<sequence length="950" mass="102952">MVFSRRGGLGARDLLLWLLLLAAWEVGSGQLHYSIPEEAKHGTFVGRVAQDLGLELAELVPRLFRVASKTHRDLLEVNLQNGILFVNSRIDREELCQWSAECSIHLELIADRPLQVFHVEVKVKDINDNPPVFRGREQIIFIPESRLLNSRFPIEGAADADIGANALLTYTLSPSDYFSLDVEASDELSKSLWLELRKYLDREETPELHLLLTATDGGKPELQGTVELLITVLDVNDNAPLFDQAVYRVHLLETTANGTLVTTLNASDADEGVNGEVVFSFDSGISRDIQEKFKVDSSSGEIRLIDKLDYEETKSYEIQVKAVDKGSPPMSNHCKVLVKVLDVNDNAPELAVTSLYLPIREDAPLSTVIALITVSDRDSGANGQVTCSLMPHVPFKLVSTFKNYYSLVLDSALDRESLSVYELVVTARDGGSPSLWATARVSVEVADVNDNAPAFAQPEYTVFVKENNPPGCHIFTVSARDADAQENALVSYSLVERRVGERALSNYVSVHAESGKVYALQPLDHEELELLQFQVSARDAGVPPLGSNVTLQVFVLDENDNAPALLAPRVGGTIGAVSELVPRLVGAGHVVAKVRAVDADSGYNAWLSYELQPAAGGARIPFRVGLYTGEISTTRVLDEADLSRYRLLVLVKDHGEPALTATATVLVSLVESGQAPKASSRASVGVAGPEAALVDVNVYLIIAICAVSSLLVLTLLLYTALRCSVPPTEGAYVPGKPTLVCSSALGSWSNSQQRRQRVCSSEGPPKTDLMAFSPGLSPSLNTSERNEQPEANLDLSGNPRQPNPDWRYSASLRAGMHSSVHLEEAGILRAGPGGPDQQWPTVSSATPEPEAGEVSPPVGAGVNSNSWTFKYGPGNPKQSGPGELPDKFIIPGSPAIISIRQEPTNSQIDKSDFITFGKKEETKKKKKKKKGNKTQEKKEKGNSTTDNSDQ</sequence>
<gene>
    <name type="primary">PCDHA1</name>
</gene>
<protein>
    <recommendedName>
        <fullName>Protocadherin alpha-1</fullName>
        <shortName>PCDH-alpha-1</shortName>
    </recommendedName>
</protein>
<proteinExistence type="evidence at protein level"/>
<name>PCDA1_HUMAN</name>
<keyword id="KW-0025">Alternative splicing</keyword>
<keyword id="KW-0106">Calcium</keyword>
<keyword id="KW-0130">Cell adhesion</keyword>
<keyword id="KW-1003">Cell membrane</keyword>
<keyword id="KW-0325">Glycoprotein</keyword>
<keyword id="KW-0472">Membrane</keyword>
<keyword id="KW-1267">Proteomics identification</keyword>
<keyword id="KW-1185">Reference proteome</keyword>
<keyword id="KW-0677">Repeat</keyword>
<keyword id="KW-0964">Secreted</keyword>
<keyword id="KW-0732">Signal</keyword>
<keyword id="KW-0812">Transmembrane</keyword>
<keyword id="KW-1133">Transmembrane helix</keyword>
<accession>Q9Y5I3</accession>
<accession>O75288</accession>
<accession>Q9NRT7</accession>
<feature type="signal peptide" evidence="2">
    <location>
        <begin position="1"/>
        <end position="29"/>
    </location>
</feature>
<feature type="chain" id="PRO_0000003884" description="Protocadherin alpha-1">
    <location>
        <begin position="30"/>
        <end position="950"/>
    </location>
</feature>
<feature type="topological domain" description="Extracellular" evidence="2">
    <location>
        <begin position="30"/>
        <end position="697"/>
    </location>
</feature>
<feature type="transmembrane region" description="Helical" evidence="2">
    <location>
        <begin position="698"/>
        <end position="718"/>
    </location>
</feature>
<feature type="topological domain" description="Cytoplasmic" evidence="2">
    <location>
        <begin position="719"/>
        <end position="950"/>
    </location>
</feature>
<feature type="domain" description="Cadherin 1" evidence="3">
    <location>
        <begin position="30"/>
        <end position="133"/>
    </location>
</feature>
<feature type="domain" description="Cadherin 2" evidence="3">
    <location>
        <begin position="157"/>
        <end position="242"/>
    </location>
</feature>
<feature type="domain" description="Cadherin 3" evidence="3">
    <location>
        <begin position="243"/>
        <end position="350"/>
    </location>
</feature>
<feature type="domain" description="Cadherin 4" evidence="3">
    <location>
        <begin position="351"/>
        <end position="455"/>
    </location>
</feature>
<feature type="domain" description="Cadherin 5" evidence="3">
    <location>
        <begin position="456"/>
        <end position="565"/>
    </location>
</feature>
<feature type="domain" description="Cadherin 6" evidence="3">
    <location>
        <begin position="588"/>
        <end position="678"/>
    </location>
</feature>
<feature type="repeat" description="PXXP 1">
    <location>
        <begin position="734"/>
        <end position="737"/>
    </location>
</feature>
<feature type="repeat" description="PXXP 2">
    <location>
        <begin position="799"/>
        <end position="802"/>
    </location>
</feature>
<feature type="repeat" description="PXXP 3">
    <location>
        <begin position="832"/>
        <end position="835"/>
    </location>
</feature>
<feature type="repeat" description="PXXP 4">
    <location>
        <begin position="873"/>
        <end position="876"/>
    </location>
</feature>
<feature type="repeat" description="PXXP 5">
    <location>
        <begin position="891"/>
        <end position="894"/>
    </location>
</feature>
<feature type="region of interest" description="5 X 4 AA repeats of P-X-X-P">
    <location>
        <begin position="734"/>
        <end position="894"/>
    </location>
</feature>
<feature type="region of interest" description="Disordered" evidence="4">
    <location>
        <begin position="752"/>
        <end position="808"/>
    </location>
</feature>
<feature type="region of interest" description="Disordered" evidence="4">
    <location>
        <begin position="828"/>
        <end position="856"/>
    </location>
</feature>
<feature type="region of interest" description="Disordered" evidence="4">
    <location>
        <begin position="871"/>
        <end position="890"/>
    </location>
</feature>
<feature type="region of interest" description="Disordered" evidence="4">
    <location>
        <begin position="900"/>
        <end position="950"/>
    </location>
</feature>
<feature type="compositionally biased region" description="Basic and acidic residues" evidence="4">
    <location>
        <begin position="909"/>
        <end position="923"/>
    </location>
</feature>
<feature type="glycosylation site" description="N-linked (GlcNAc...) asparagine" evidence="2">
    <location>
        <position position="257"/>
    </location>
</feature>
<feature type="glycosylation site" description="N-linked (GlcNAc...) asparagine" evidence="2">
    <location>
        <position position="265"/>
    </location>
</feature>
<feature type="glycosylation site" description="N-linked (GlcNAc...) asparagine" evidence="2">
    <location>
        <position position="548"/>
    </location>
</feature>
<feature type="splice variant" id="VSP_000670" description="In isoform 2." evidence="6">
    <location>
        <begin position="535"/>
        <end position="798"/>
    </location>
</feature>
<feature type="splice variant" id="VSP_000671" description="In isoform 3." evidence="5">
    <original>PRQPNPDWR</original>
    <variation>VSPTFEFWL</variation>
    <location>
        <begin position="799"/>
        <end position="807"/>
    </location>
</feature>
<feature type="splice variant" id="VSP_000672" description="In isoform 3." evidence="5">
    <location>
        <begin position="808"/>
        <end position="950"/>
    </location>
</feature>
<feature type="sequence variant" id="VAR_048521" description="In dbSNP:rs34575154.">
    <original>R</original>
    <variation>G</variation>
    <location>
        <position position="360"/>
    </location>
</feature>
<feature type="sequence variant" id="VAR_021872" description="In dbSNP:rs3733712.">
    <original>N</original>
    <variation>H</variation>
    <location>
        <position position="449"/>
    </location>
</feature>
<feature type="sequence variant" id="VAR_021873" description="In dbSNP:rs2240696.">
    <original>Y</original>
    <variation>C</variation>
    <location>
        <position position="732"/>
    </location>
</feature>
<feature type="sequence variant" id="VAR_048522" description="In dbSNP:rs2240695.">
    <original>C</original>
    <variation>F</variation>
    <location>
        <position position="759"/>
    </location>
</feature>
<dbReference type="EMBL" id="AF152305">
    <property type="protein sequence ID" value="AAD43699.1"/>
    <property type="molecule type" value="mRNA"/>
</dbReference>
<dbReference type="EMBL" id="AF152479">
    <property type="protein sequence ID" value="AAD43740.1"/>
    <property type="molecule type" value="mRNA"/>
</dbReference>
<dbReference type="EMBL" id="AF169695">
    <property type="protein sequence ID" value="AAF89692.1"/>
    <property type="molecule type" value="mRNA"/>
</dbReference>
<dbReference type="EMBL" id="AC005609">
    <property type="protein sequence ID" value="AAC34325.1"/>
    <property type="molecule type" value="Genomic_DNA"/>
</dbReference>
<dbReference type="CCDS" id="CCDS54912.1">
    <molecule id="Q9Y5I3-2"/>
</dbReference>
<dbReference type="CCDS" id="CCDS54913.1">
    <molecule id="Q9Y5I3-1"/>
</dbReference>
<dbReference type="RefSeq" id="NP_061723.1">
    <molecule id="Q9Y5I3-1"/>
    <property type="nucleotide sequence ID" value="NM_018900.4"/>
</dbReference>
<dbReference type="RefSeq" id="NP_113598.1">
    <molecule id="Q9Y5I3-3"/>
    <property type="nucleotide sequence ID" value="NM_031410.3"/>
</dbReference>
<dbReference type="RefSeq" id="NP_113599.1">
    <molecule id="Q9Y5I3-2"/>
    <property type="nucleotide sequence ID" value="NM_031411.3"/>
</dbReference>
<dbReference type="SMR" id="Q9Y5I3"/>
<dbReference type="BioGRID" id="121087">
    <property type="interactions" value="8"/>
</dbReference>
<dbReference type="FunCoup" id="Q9Y5I3">
    <property type="interactions" value="42"/>
</dbReference>
<dbReference type="IntAct" id="Q9Y5I3">
    <property type="interactions" value="7"/>
</dbReference>
<dbReference type="STRING" id="9606.ENSP00000420840"/>
<dbReference type="GlyCosmos" id="Q9Y5I3">
    <property type="glycosylation" value="3 sites, No reported glycans"/>
</dbReference>
<dbReference type="GlyGen" id="Q9Y5I3">
    <property type="glycosylation" value="4 sites"/>
</dbReference>
<dbReference type="iPTMnet" id="Q9Y5I3"/>
<dbReference type="PhosphoSitePlus" id="Q9Y5I3"/>
<dbReference type="BioMuta" id="PCDHA1"/>
<dbReference type="DMDM" id="13878434"/>
<dbReference type="jPOST" id="Q9Y5I3"/>
<dbReference type="MassIVE" id="Q9Y5I3"/>
<dbReference type="PaxDb" id="9606-ENSP00000420840"/>
<dbReference type="PeptideAtlas" id="Q9Y5I3"/>
<dbReference type="ProteomicsDB" id="86411">
    <molecule id="Q9Y5I3-1"/>
</dbReference>
<dbReference type="ProteomicsDB" id="86412">
    <molecule id="Q9Y5I3-2"/>
</dbReference>
<dbReference type="ProteomicsDB" id="86413">
    <molecule id="Q9Y5I3-3"/>
</dbReference>
<dbReference type="Antibodypedia" id="27106">
    <property type="antibodies" value="110 antibodies from 16 providers"/>
</dbReference>
<dbReference type="DNASU" id="56147"/>
<dbReference type="Ensembl" id="ENST00000378133.4">
    <molecule id="Q9Y5I3-3"/>
    <property type="protein sequence ID" value="ENSP00000367373.3"/>
    <property type="gene ID" value="ENSG00000204970.10"/>
</dbReference>
<dbReference type="Ensembl" id="ENST00000394633.7">
    <molecule id="Q9Y5I3-2"/>
    <property type="protein sequence ID" value="ENSP00000378129.3"/>
    <property type="gene ID" value="ENSG00000204970.10"/>
</dbReference>
<dbReference type="Ensembl" id="ENST00000504120.4">
    <molecule id="Q9Y5I3-1"/>
    <property type="protein sequence ID" value="ENSP00000420840.3"/>
    <property type="gene ID" value="ENSG00000204970.10"/>
</dbReference>
<dbReference type="Ensembl" id="ENST00000708285.1">
    <molecule id="Q9Y5I3-3"/>
    <property type="protein sequence ID" value="ENSP00000517136.1"/>
    <property type="gene ID" value="ENSG00000291649.1"/>
</dbReference>
<dbReference type="Ensembl" id="ENST00000708286.1">
    <molecule id="Q9Y5I3-1"/>
    <property type="protein sequence ID" value="ENSP00000517137.1"/>
    <property type="gene ID" value="ENSG00000291649.1"/>
</dbReference>
<dbReference type="Ensembl" id="ENST00000708287.1">
    <molecule id="Q9Y5I3-2"/>
    <property type="protein sequence ID" value="ENSP00000517138.1"/>
    <property type="gene ID" value="ENSG00000291649.1"/>
</dbReference>
<dbReference type="GeneID" id="56147"/>
<dbReference type="KEGG" id="hsa:56147"/>
<dbReference type="MANE-Select" id="ENST00000504120.4">
    <property type="protein sequence ID" value="ENSP00000420840.3"/>
    <property type="RefSeq nucleotide sequence ID" value="NM_018900.4"/>
    <property type="RefSeq protein sequence ID" value="NP_061723.1"/>
</dbReference>
<dbReference type="UCSC" id="uc003lgz.5">
    <molecule id="Q9Y5I3-1"/>
    <property type="organism name" value="human"/>
</dbReference>
<dbReference type="AGR" id="HGNC:8663"/>
<dbReference type="CTD" id="56147"/>
<dbReference type="DisGeNET" id="56147"/>
<dbReference type="GeneCards" id="PCDHA1"/>
<dbReference type="HGNC" id="HGNC:8663">
    <property type="gene designation" value="PCDHA1"/>
</dbReference>
<dbReference type="HPA" id="ENSG00000204970">
    <property type="expression patterns" value="Group enriched (brain, pituitary gland, testis)"/>
</dbReference>
<dbReference type="MalaCards" id="PCDHA1"/>
<dbReference type="MIM" id="604966">
    <property type="type" value="gene"/>
</dbReference>
<dbReference type="MIM" id="606307">
    <property type="type" value="gene"/>
</dbReference>
<dbReference type="neXtProt" id="NX_Q9Y5I3"/>
<dbReference type="OpenTargets" id="ENSG00000204970"/>
<dbReference type="PharmGKB" id="PA33009"/>
<dbReference type="VEuPathDB" id="HostDB:ENSG00000204970"/>
<dbReference type="eggNOG" id="KOG3594">
    <property type="taxonomic scope" value="Eukaryota"/>
</dbReference>
<dbReference type="GeneTree" id="ENSGT00940000165185"/>
<dbReference type="HOGENOM" id="CLU_006480_3_0_1"/>
<dbReference type="InParanoid" id="Q9Y5I3"/>
<dbReference type="OMA" id="IKNYEHS"/>
<dbReference type="OrthoDB" id="6252479at2759"/>
<dbReference type="PAN-GO" id="Q9Y5I3">
    <property type="GO annotations" value="2 GO annotations based on evolutionary models"/>
</dbReference>
<dbReference type="PhylomeDB" id="Q9Y5I3"/>
<dbReference type="TreeFam" id="TF332299"/>
<dbReference type="PathwayCommons" id="Q9Y5I3"/>
<dbReference type="SignaLink" id="Q9Y5I3"/>
<dbReference type="SIGNOR" id="Q9Y5I3"/>
<dbReference type="BioGRID-ORCS" id="56147">
    <property type="hits" value="45 hits in 1095 CRISPR screens"/>
</dbReference>
<dbReference type="GeneWiki" id="Protocadherin_alpha_1"/>
<dbReference type="GenomeRNAi" id="56147"/>
<dbReference type="Pharos" id="Q9Y5I3">
    <property type="development level" value="Tbio"/>
</dbReference>
<dbReference type="PRO" id="PR:Q9Y5I3"/>
<dbReference type="Proteomes" id="UP000005640">
    <property type="component" value="Chromosome 5"/>
</dbReference>
<dbReference type="RNAct" id="Q9Y5I3">
    <property type="molecule type" value="protein"/>
</dbReference>
<dbReference type="Bgee" id="ENSG00000204970">
    <property type="expression patterns" value="Expressed in cortical plate and 39 other cell types or tissues"/>
</dbReference>
<dbReference type="GO" id="GO:0005783">
    <property type="term" value="C:endoplasmic reticulum"/>
    <property type="evidence" value="ECO:0007669"/>
    <property type="project" value="Ensembl"/>
</dbReference>
<dbReference type="GO" id="GO:0005576">
    <property type="term" value="C:extracellular region"/>
    <property type="evidence" value="ECO:0007669"/>
    <property type="project" value="UniProtKB-SubCell"/>
</dbReference>
<dbReference type="GO" id="GO:0005886">
    <property type="term" value="C:plasma membrane"/>
    <property type="evidence" value="ECO:0000318"/>
    <property type="project" value="GO_Central"/>
</dbReference>
<dbReference type="GO" id="GO:0005509">
    <property type="term" value="F:calcium ion binding"/>
    <property type="evidence" value="ECO:0007669"/>
    <property type="project" value="InterPro"/>
</dbReference>
<dbReference type="GO" id="GO:0007155">
    <property type="term" value="P:cell adhesion"/>
    <property type="evidence" value="ECO:0000318"/>
    <property type="project" value="GO_Central"/>
</dbReference>
<dbReference type="GO" id="GO:0007156">
    <property type="term" value="P:homophilic cell adhesion via plasma membrane adhesion molecules"/>
    <property type="evidence" value="ECO:0007669"/>
    <property type="project" value="InterPro"/>
</dbReference>
<dbReference type="GO" id="GO:0007399">
    <property type="term" value="P:nervous system development"/>
    <property type="evidence" value="ECO:0000304"/>
    <property type="project" value="ProtInc"/>
</dbReference>
<dbReference type="CDD" id="cd11304">
    <property type="entry name" value="Cadherin_repeat"/>
    <property type="match status" value="6"/>
</dbReference>
<dbReference type="FunFam" id="2.60.40.60:FF:000001">
    <property type="entry name" value="Protocadherin alpha 2"/>
    <property type="match status" value="1"/>
</dbReference>
<dbReference type="FunFam" id="2.60.40.60:FF:000002">
    <property type="entry name" value="Protocadherin alpha 2"/>
    <property type="match status" value="1"/>
</dbReference>
<dbReference type="FunFam" id="2.60.40.60:FF:000003">
    <property type="entry name" value="Protocadherin alpha 2"/>
    <property type="match status" value="1"/>
</dbReference>
<dbReference type="FunFam" id="2.60.40.60:FF:000006">
    <property type="entry name" value="Protocadherin alpha 2"/>
    <property type="match status" value="1"/>
</dbReference>
<dbReference type="FunFam" id="2.60.40.60:FF:000007">
    <property type="entry name" value="Protocadherin alpha 2"/>
    <property type="match status" value="1"/>
</dbReference>
<dbReference type="FunFam" id="2.60.40.60:FF:000076">
    <property type="entry name" value="Protocadherin alpha 2"/>
    <property type="match status" value="1"/>
</dbReference>
<dbReference type="Gene3D" id="2.60.40.60">
    <property type="entry name" value="Cadherins"/>
    <property type="match status" value="6"/>
</dbReference>
<dbReference type="InterPro" id="IPR002126">
    <property type="entry name" value="Cadherin-like_dom"/>
</dbReference>
<dbReference type="InterPro" id="IPR015919">
    <property type="entry name" value="Cadherin-like_sf"/>
</dbReference>
<dbReference type="InterPro" id="IPR031904">
    <property type="entry name" value="Cadherin_CBD"/>
</dbReference>
<dbReference type="InterPro" id="IPR020894">
    <property type="entry name" value="Cadherin_CS"/>
</dbReference>
<dbReference type="InterPro" id="IPR013164">
    <property type="entry name" value="Cadherin_N"/>
</dbReference>
<dbReference type="InterPro" id="IPR050174">
    <property type="entry name" value="Protocadherin/Cadherin-CA"/>
</dbReference>
<dbReference type="PANTHER" id="PTHR24028">
    <property type="entry name" value="CADHERIN-87A"/>
    <property type="match status" value="1"/>
</dbReference>
<dbReference type="PANTHER" id="PTHR24028:SF92">
    <property type="entry name" value="PROTOCADHERIN ALPHA-1"/>
    <property type="match status" value="1"/>
</dbReference>
<dbReference type="Pfam" id="PF00028">
    <property type="entry name" value="Cadherin"/>
    <property type="match status" value="5"/>
</dbReference>
<dbReference type="Pfam" id="PF08266">
    <property type="entry name" value="Cadherin_2"/>
    <property type="match status" value="1"/>
</dbReference>
<dbReference type="Pfam" id="PF15974">
    <property type="entry name" value="Cadherin_tail"/>
    <property type="match status" value="1"/>
</dbReference>
<dbReference type="PRINTS" id="PR00205">
    <property type="entry name" value="CADHERIN"/>
</dbReference>
<dbReference type="SMART" id="SM00112">
    <property type="entry name" value="CA"/>
    <property type="match status" value="6"/>
</dbReference>
<dbReference type="SUPFAM" id="SSF49313">
    <property type="entry name" value="Cadherin-like"/>
    <property type="match status" value="6"/>
</dbReference>
<dbReference type="PROSITE" id="PS00232">
    <property type="entry name" value="CADHERIN_1"/>
    <property type="match status" value="5"/>
</dbReference>
<dbReference type="PROSITE" id="PS50268">
    <property type="entry name" value="CADHERIN_2"/>
    <property type="match status" value="6"/>
</dbReference>